<organism>
    <name type="scientific">Pasteurella multocida (strain Pm70)</name>
    <dbReference type="NCBI Taxonomy" id="272843"/>
    <lineage>
        <taxon>Bacteria</taxon>
        <taxon>Pseudomonadati</taxon>
        <taxon>Pseudomonadota</taxon>
        <taxon>Gammaproteobacteria</taxon>
        <taxon>Pasteurellales</taxon>
        <taxon>Pasteurellaceae</taxon>
        <taxon>Pasteurella</taxon>
    </lineage>
</organism>
<comment type="function">
    <text evidence="1">Digests double-stranded RNA. Involved in the processing of primary rRNA transcript to yield the immediate precursors to the large and small rRNAs (23S and 16S). Also processes some mRNAs, and tRNAs when they are encoded in the rRNA operon (By similarity).</text>
</comment>
<comment type="function">
    <text evidence="3 4">CRISPR (clustered regularly interspaced short palindromic repeat) is an adaptive immune system that provides protection against mobile genetic elements (viruses, transposable elements and conjugative plasmids). CRISPR clusters contain spacers, sequences complementary to antecedent mobile elements, and target invading nucleic acids. CRISPR clusters are transcribed and processed into CRISPR RNA (crRNA). In this organism endogenous ribonuclease 3 and Cas9 are required for correct coprocessing of pre-crRNA and the trans-encoded small RNA (tracrRNA). Cas9, crRNA and tracrRNA are required for cleavage of invading DNA (Probable). Complements pre-crRNA and tracrRNA coprocessing defects in an rnc deletion in S.pyogenes strain 370 (PubMed:24270795).</text>
</comment>
<comment type="catalytic activity">
    <reaction evidence="2">
        <text>Endonucleolytic cleavage to 5'-phosphomonoester.</text>
        <dbReference type="EC" id="3.1.26.3"/>
    </reaction>
</comment>
<comment type="cofactor">
    <cofactor evidence="2">
        <name>Mg(2+)</name>
        <dbReference type="ChEBI" id="CHEBI:18420"/>
    </cofactor>
</comment>
<comment type="subunit">
    <text evidence="2">Homodimer.</text>
</comment>
<comment type="subcellular location">
    <subcellularLocation>
        <location evidence="2">Cytoplasm</location>
    </subcellularLocation>
</comment>
<comment type="similarity">
    <text evidence="2">Belongs to the ribonuclease III family.</text>
</comment>
<proteinExistence type="inferred from homology"/>
<accession>P57805</accession>
<protein>
    <recommendedName>
        <fullName evidence="2">Ribonuclease 3</fullName>
        <ecNumber evidence="2">3.1.26.3</ecNumber>
    </recommendedName>
    <alternativeName>
        <fullName evidence="2">Ribonuclease III</fullName>
        <shortName evidence="2">RNase III</shortName>
    </alternativeName>
</protein>
<name>RNC_PASMU</name>
<dbReference type="EC" id="3.1.26.3" evidence="2"/>
<dbReference type="EMBL" id="AE004439">
    <property type="protein sequence ID" value="AAK02145.1"/>
    <property type="molecule type" value="Genomic_DNA"/>
</dbReference>
<dbReference type="RefSeq" id="WP_010906462.1">
    <property type="nucleotide sequence ID" value="NC_002663.1"/>
</dbReference>
<dbReference type="SMR" id="P57805"/>
<dbReference type="STRING" id="272843.PM0061"/>
<dbReference type="EnsemblBacteria" id="AAK02145">
    <property type="protein sequence ID" value="AAK02145"/>
    <property type="gene ID" value="PM0061"/>
</dbReference>
<dbReference type="KEGG" id="pmu:PM0061"/>
<dbReference type="HOGENOM" id="CLU_000907_1_1_6"/>
<dbReference type="OrthoDB" id="9805026at2"/>
<dbReference type="Proteomes" id="UP000000809">
    <property type="component" value="Chromosome"/>
</dbReference>
<dbReference type="GO" id="GO:0005737">
    <property type="term" value="C:cytoplasm"/>
    <property type="evidence" value="ECO:0007669"/>
    <property type="project" value="UniProtKB-SubCell"/>
</dbReference>
<dbReference type="GO" id="GO:0003725">
    <property type="term" value="F:double-stranded RNA binding"/>
    <property type="evidence" value="ECO:0007669"/>
    <property type="project" value="TreeGrafter"/>
</dbReference>
<dbReference type="GO" id="GO:0046872">
    <property type="term" value="F:metal ion binding"/>
    <property type="evidence" value="ECO:0007669"/>
    <property type="project" value="UniProtKB-KW"/>
</dbReference>
<dbReference type="GO" id="GO:0004525">
    <property type="term" value="F:ribonuclease III activity"/>
    <property type="evidence" value="ECO:0007669"/>
    <property type="project" value="UniProtKB-UniRule"/>
</dbReference>
<dbReference type="GO" id="GO:0019843">
    <property type="term" value="F:rRNA binding"/>
    <property type="evidence" value="ECO:0007669"/>
    <property type="project" value="UniProtKB-KW"/>
</dbReference>
<dbReference type="GO" id="GO:0006397">
    <property type="term" value="P:mRNA processing"/>
    <property type="evidence" value="ECO:0007669"/>
    <property type="project" value="UniProtKB-UniRule"/>
</dbReference>
<dbReference type="GO" id="GO:0010468">
    <property type="term" value="P:regulation of gene expression"/>
    <property type="evidence" value="ECO:0007669"/>
    <property type="project" value="TreeGrafter"/>
</dbReference>
<dbReference type="GO" id="GO:0006364">
    <property type="term" value="P:rRNA processing"/>
    <property type="evidence" value="ECO:0007669"/>
    <property type="project" value="UniProtKB-UniRule"/>
</dbReference>
<dbReference type="GO" id="GO:0008033">
    <property type="term" value="P:tRNA processing"/>
    <property type="evidence" value="ECO:0007669"/>
    <property type="project" value="UniProtKB-KW"/>
</dbReference>
<dbReference type="CDD" id="cd10845">
    <property type="entry name" value="DSRM_RNAse_III_family"/>
    <property type="match status" value="1"/>
</dbReference>
<dbReference type="CDD" id="cd00593">
    <property type="entry name" value="RIBOc"/>
    <property type="match status" value="1"/>
</dbReference>
<dbReference type="FunFam" id="1.10.1520.10:FF:000001">
    <property type="entry name" value="Ribonuclease 3"/>
    <property type="match status" value="1"/>
</dbReference>
<dbReference type="FunFam" id="3.30.160.20:FF:000003">
    <property type="entry name" value="Ribonuclease 3"/>
    <property type="match status" value="1"/>
</dbReference>
<dbReference type="Gene3D" id="3.30.160.20">
    <property type="match status" value="1"/>
</dbReference>
<dbReference type="Gene3D" id="1.10.1520.10">
    <property type="entry name" value="Ribonuclease III domain"/>
    <property type="match status" value="1"/>
</dbReference>
<dbReference type="HAMAP" id="MF_00104">
    <property type="entry name" value="RNase_III"/>
    <property type="match status" value="1"/>
</dbReference>
<dbReference type="InterPro" id="IPR014720">
    <property type="entry name" value="dsRBD_dom"/>
</dbReference>
<dbReference type="InterPro" id="IPR011907">
    <property type="entry name" value="RNase_III"/>
</dbReference>
<dbReference type="InterPro" id="IPR000999">
    <property type="entry name" value="RNase_III_dom"/>
</dbReference>
<dbReference type="InterPro" id="IPR036389">
    <property type="entry name" value="RNase_III_sf"/>
</dbReference>
<dbReference type="NCBIfam" id="TIGR02191">
    <property type="entry name" value="RNaseIII"/>
    <property type="match status" value="1"/>
</dbReference>
<dbReference type="PANTHER" id="PTHR11207:SF0">
    <property type="entry name" value="RIBONUCLEASE 3"/>
    <property type="match status" value="1"/>
</dbReference>
<dbReference type="PANTHER" id="PTHR11207">
    <property type="entry name" value="RIBONUCLEASE III"/>
    <property type="match status" value="1"/>
</dbReference>
<dbReference type="Pfam" id="PF00035">
    <property type="entry name" value="dsrm"/>
    <property type="match status" value="1"/>
</dbReference>
<dbReference type="Pfam" id="PF14622">
    <property type="entry name" value="Ribonucleas_3_3"/>
    <property type="match status" value="1"/>
</dbReference>
<dbReference type="SMART" id="SM00358">
    <property type="entry name" value="DSRM"/>
    <property type="match status" value="1"/>
</dbReference>
<dbReference type="SMART" id="SM00535">
    <property type="entry name" value="RIBOc"/>
    <property type="match status" value="1"/>
</dbReference>
<dbReference type="SUPFAM" id="SSF54768">
    <property type="entry name" value="dsRNA-binding domain-like"/>
    <property type="match status" value="1"/>
</dbReference>
<dbReference type="SUPFAM" id="SSF69065">
    <property type="entry name" value="RNase III domain-like"/>
    <property type="match status" value="1"/>
</dbReference>
<dbReference type="PROSITE" id="PS50137">
    <property type="entry name" value="DS_RBD"/>
    <property type="match status" value="1"/>
</dbReference>
<dbReference type="PROSITE" id="PS00517">
    <property type="entry name" value="RNASE_3_1"/>
    <property type="match status" value="1"/>
</dbReference>
<dbReference type="PROSITE" id="PS50142">
    <property type="entry name" value="RNASE_3_2"/>
    <property type="match status" value="1"/>
</dbReference>
<reference key="1">
    <citation type="journal article" date="2001" name="Proc. Natl. Acad. Sci. U.S.A.">
        <title>Complete genomic sequence of Pasteurella multocida Pm70.</title>
        <authorList>
            <person name="May B.J."/>
            <person name="Zhang Q."/>
            <person name="Li L.L."/>
            <person name="Paustian M.L."/>
            <person name="Whittam T.S."/>
            <person name="Kapur V."/>
        </authorList>
    </citation>
    <scope>NUCLEOTIDE SEQUENCE [LARGE SCALE GENOMIC DNA]</scope>
    <source>
        <strain>Pm70</strain>
    </source>
</reference>
<reference key="2">
    <citation type="journal article" date="2014" name="Nucleic Acids Res.">
        <title>Phylogeny of Cas9 determines functional exchangeability of dual-RNA and Cas9 among orthologous type II CRISPR-Cas systems.</title>
        <authorList>
            <person name="Fonfara I."/>
            <person name="Le Rhun A."/>
            <person name="Chylinski K."/>
            <person name="Makarova K.S."/>
            <person name="Lecrivain A.L."/>
            <person name="Bzdrenga J."/>
            <person name="Koonin E.V."/>
            <person name="Charpentier E."/>
        </authorList>
    </citation>
    <scope>FUNCTION</scope>
</reference>
<sequence length="225" mass="25461">MTQNLERLQRQIGYQFNQPALLKQALTHRSAAVKHNERLEFLGDAILNFIIAEALYHQFPKCNEGELSRMRATLVREPTLASLARQFELGDYLSLGPGELKSGGFRRESILADCVEAIIGAISLDSDLATTTKIVQHWYQAQLKQIQPGDNQKDPKTRLQEYLQGKRLPLPTYNVVEIKGEAHCQTFTVECYVKNIDRTFMGSGASRRKAEQAAAEKILQLLEMK</sequence>
<gene>
    <name evidence="2" type="primary">rnc</name>
    <name type="ordered locus">PM0061</name>
</gene>
<evidence type="ECO:0000250" key="1"/>
<evidence type="ECO:0000255" key="2">
    <source>
        <dbReference type="HAMAP-Rule" id="MF_00104"/>
    </source>
</evidence>
<evidence type="ECO:0000269" key="3">
    <source>
    </source>
</evidence>
<evidence type="ECO:0000305" key="4"/>
<keyword id="KW-0963">Cytoplasm</keyword>
<keyword id="KW-0255">Endonuclease</keyword>
<keyword id="KW-0378">Hydrolase</keyword>
<keyword id="KW-0460">Magnesium</keyword>
<keyword id="KW-0479">Metal-binding</keyword>
<keyword id="KW-0507">mRNA processing</keyword>
<keyword id="KW-0540">Nuclease</keyword>
<keyword id="KW-1185">Reference proteome</keyword>
<keyword id="KW-0694">RNA-binding</keyword>
<keyword id="KW-0698">rRNA processing</keyword>
<keyword id="KW-0699">rRNA-binding</keyword>
<keyword id="KW-0819">tRNA processing</keyword>
<feature type="chain" id="PRO_0000180418" description="Ribonuclease 3">
    <location>
        <begin position="1"/>
        <end position="225"/>
    </location>
</feature>
<feature type="domain" description="RNase III" evidence="2">
    <location>
        <begin position="5"/>
        <end position="127"/>
    </location>
</feature>
<feature type="domain" description="DRBM" evidence="2">
    <location>
        <begin position="154"/>
        <end position="224"/>
    </location>
</feature>
<feature type="active site" evidence="2">
    <location>
        <position position="44"/>
    </location>
</feature>
<feature type="active site" evidence="2">
    <location>
        <position position="116"/>
    </location>
</feature>
<feature type="binding site" evidence="2">
    <location>
        <position position="40"/>
    </location>
    <ligand>
        <name>Mg(2+)</name>
        <dbReference type="ChEBI" id="CHEBI:18420"/>
    </ligand>
</feature>
<feature type="binding site" evidence="2">
    <location>
        <position position="113"/>
    </location>
    <ligand>
        <name>Mg(2+)</name>
        <dbReference type="ChEBI" id="CHEBI:18420"/>
    </ligand>
</feature>
<feature type="binding site" evidence="2">
    <location>
        <position position="116"/>
    </location>
    <ligand>
        <name>Mg(2+)</name>
        <dbReference type="ChEBI" id="CHEBI:18420"/>
    </ligand>
</feature>